<reference key="1">
    <citation type="journal article" date="2000" name="DNA Res.">
        <title>Structural analysis of Arabidopsis thaliana chromosome 5. X. Sequence features of the regions of 3,076,755 bp covered by sixty P1 and TAC clones.</title>
        <authorList>
            <person name="Sato S."/>
            <person name="Nakamura Y."/>
            <person name="Kaneko T."/>
            <person name="Katoh T."/>
            <person name="Asamizu E."/>
            <person name="Kotani H."/>
            <person name="Tabata S."/>
        </authorList>
    </citation>
    <scope>NUCLEOTIDE SEQUENCE [LARGE SCALE GENOMIC DNA]</scope>
    <source>
        <strain>cv. Columbia</strain>
    </source>
</reference>
<reference key="2">
    <citation type="submission" date="1999-05" db="EMBL/GenBank/DDBJ databases">
        <title>Structural analysis of Arabidopsis thaliana chromosome 5. XI.</title>
        <authorList>
            <person name="Kaneko T."/>
            <person name="Katoh T."/>
            <person name="Asamizu E."/>
            <person name="Sato S."/>
            <person name="Nakamura Y."/>
            <person name="Kotani H."/>
            <person name="Tabata S."/>
        </authorList>
    </citation>
    <scope>NUCLEOTIDE SEQUENCE [LARGE SCALE GENOMIC DNA]</scope>
    <source>
        <strain>cv. Columbia</strain>
    </source>
</reference>
<reference key="3">
    <citation type="journal article" date="2017" name="Plant J.">
        <title>Araport11: a complete reannotation of the Arabidopsis thaliana reference genome.</title>
        <authorList>
            <person name="Cheng C.Y."/>
            <person name="Krishnakumar V."/>
            <person name="Chan A.P."/>
            <person name="Thibaud-Nissen F."/>
            <person name="Schobel S."/>
            <person name="Town C.D."/>
        </authorList>
    </citation>
    <scope>GENOME REANNOTATION</scope>
    <source>
        <strain>cv. Columbia</strain>
    </source>
</reference>
<reference key="4">
    <citation type="submission" date="2009-03" db="EMBL/GenBank/DDBJ databases">
        <title>ORF cloning and analysis of Arabidopsis transcription factor genes.</title>
        <authorList>
            <person name="Fujita M."/>
            <person name="Mizukado S."/>
            <person name="Seki M."/>
            <person name="Shinozaki K."/>
            <person name="Mitsuda N."/>
            <person name="Takiguchi Y."/>
            <person name="Takagi M."/>
        </authorList>
    </citation>
    <scope>NUCLEOTIDE SEQUENCE [LARGE SCALE MRNA]</scope>
</reference>
<reference key="5">
    <citation type="journal article" date="2008" name="Trends Plant Sci.">
        <title>The plant B3 superfamily.</title>
        <authorList>
            <person name="Swaminathan K."/>
            <person name="Peterson K."/>
            <person name="Jack T."/>
        </authorList>
    </citation>
    <scope>GENE FAMILY</scope>
</reference>
<sequence>MNTRGNYSNGFTSKFFKPYLPSESGDDLVLPISFNSCLPKSLPKTVTVRSISGNIWKLGFKKCGGEVERFVMVSGWKKIVRDENLNGGDLLSFEFDGSHFFNFSIFDHETTCKRLKRSSEQSKDIIKVGSDCEEESQASDDVIVLNSDDSDDSDNDYSVEDDNVAEDDDGLEDEVDVEAEDGYDAKDSDGLEDEDDDEAEDGYDAKDDDGLEDEDDLEDEDDERRYLDDHENPYFTMTLNPKKKSQLHIPAHVIRDYDLTFPERITVVDEMGALEKAIKIQKNGCIFVKGFGSFIRRNKMKMTDKMICELKRTGGNLVHTIKVKIISG</sequence>
<accession>Q9FHB0</accession>
<accession>C0SVU9</accession>
<keyword id="KW-0238">DNA-binding</keyword>
<keyword id="KW-0539">Nucleus</keyword>
<keyword id="KW-1185">Reference proteome</keyword>
<keyword id="KW-0804">Transcription</keyword>
<keyword id="KW-0805">Transcription regulation</keyword>
<gene>
    <name type="ordered locus">At5g60140</name>
    <name type="ORF">MGO3.2</name>
</gene>
<evidence type="ECO:0000255" key="1">
    <source>
        <dbReference type="PROSITE-ProRule" id="PRU00326"/>
    </source>
</evidence>
<evidence type="ECO:0000256" key="2">
    <source>
        <dbReference type="SAM" id="MobiDB-lite"/>
    </source>
</evidence>
<evidence type="ECO:0000305" key="3"/>
<proteinExistence type="evidence at transcript level"/>
<name>Y5014_ARATH</name>
<protein>
    <recommendedName>
        <fullName>B3 domain-containing protein At5g60140</fullName>
    </recommendedName>
</protein>
<comment type="subcellular location">
    <subcellularLocation>
        <location evidence="1">Nucleus</location>
    </subcellularLocation>
</comment>
<comment type="sequence caution" evidence="3">
    <conflict type="erroneous gene model prediction">
        <sequence resource="EMBL-CDS" id="BAB10312"/>
    </conflict>
</comment>
<organism>
    <name type="scientific">Arabidopsis thaliana</name>
    <name type="common">Mouse-ear cress</name>
    <dbReference type="NCBI Taxonomy" id="3702"/>
    <lineage>
        <taxon>Eukaryota</taxon>
        <taxon>Viridiplantae</taxon>
        <taxon>Streptophyta</taxon>
        <taxon>Embryophyta</taxon>
        <taxon>Tracheophyta</taxon>
        <taxon>Spermatophyta</taxon>
        <taxon>Magnoliopsida</taxon>
        <taxon>eudicotyledons</taxon>
        <taxon>Gunneridae</taxon>
        <taxon>Pentapetalae</taxon>
        <taxon>rosids</taxon>
        <taxon>malvids</taxon>
        <taxon>Brassicales</taxon>
        <taxon>Brassicaceae</taxon>
        <taxon>Camelineae</taxon>
        <taxon>Arabidopsis</taxon>
    </lineage>
</organism>
<dbReference type="EMBL" id="AB019231">
    <property type="protein sequence ID" value="BAB10312.1"/>
    <property type="status" value="ALT_SEQ"/>
    <property type="molecule type" value="Genomic_DNA"/>
</dbReference>
<dbReference type="EMBL" id="AB026632">
    <property type="protein sequence ID" value="BAB10312.1"/>
    <property type="status" value="JOINED"/>
    <property type="molecule type" value="Genomic_DNA"/>
</dbReference>
<dbReference type="EMBL" id="CP002688">
    <property type="protein sequence ID" value="AED97284.1"/>
    <property type="molecule type" value="Genomic_DNA"/>
</dbReference>
<dbReference type="EMBL" id="AB493802">
    <property type="protein sequence ID" value="BAH30640.1"/>
    <property type="molecule type" value="mRNA"/>
</dbReference>
<dbReference type="RefSeq" id="NP_200822.1">
    <property type="nucleotide sequence ID" value="NM_125407.4"/>
</dbReference>
<dbReference type="SMR" id="Q9FHB0"/>
<dbReference type="BioGRID" id="21380">
    <property type="interactions" value="2"/>
</dbReference>
<dbReference type="FunCoup" id="Q9FHB0">
    <property type="interactions" value="3"/>
</dbReference>
<dbReference type="IntAct" id="Q9FHB0">
    <property type="interactions" value="2"/>
</dbReference>
<dbReference type="STRING" id="3702.Q9FHB0"/>
<dbReference type="PaxDb" id="3702-AT5G60140.1"/>
<dbReference type="ProteomicsDB" id="243009"/>
<dbReference type="EnsemblPlants" id="AT5G60140.1">
    <property type="protein sequence ID" value="AT5G60140.1"/>
    <property type="gene ID" value="AT5G60140"/>
</dbReference>
<dbReference type="GeneID" id="836136"/>
<dbReference type="Gramene" id="AT5G60140.1">
    <property type="protein sequence ID" value="AT5G60140.1"/>
    <property type="gene ID" value="AT5G60140"/>
</dbReference>
<dbReference type="KEGG" id="ath:AT5G60140"/>
<dbReference type="Araport" id="AT5G60140"/>
<dbReference type="TAIR" id="AT5G60140"/>
<dbReference type="eggNOG" id="ENOG502S4ID">
    <property type="taxonomic scope" value="Eukaryota"/>
</dbReference>
<dbReference type="HOGENOM" id="CLU_048511_0_0_1"/>
<dbReference type="InParanoid" id="Q9FHB0"/>
<dbReference type="OMA" id="TDKMICE"/>
<dbReference type="PhylomeDB" id="Q9FHB0"/>
<dbReference type="PRO" id="PR:Q9FHB0"/>
<dbReference type="Proteomes" id="UP000006548">
    <property type="component" value="Chromosome 5"/>
</dbReference>
<dbReference type="ExpressionAtlas" id="Q9FHB0">
    <property type="expression patterns" value="baseline and differential"/>
</dbReference>
<dbReference type="GO" id="GO:0005634">
    <property type="term" value="C:nucleus"/>
    <property type="evidence" value="ECO:0007669"/>
    <property type="project" value="UniProtKB-SubCell"/>
</dbReference>
<dbReference type="GO" id="GO:0003677">
    <property type="term" value="F:DNA binding"/>
    <property type="evidence" value="ECO:0007669"/>
    <property type="project" value="UniProtKB-KW"/>
</dbReference>
<dbReference type="GO" id="GO:0046982">
    <property type="term" value="F:protein heterodimerization activity"/>
    <property type="evidence" value="ECO:0000353"/>
    <property type="project" value="TAIR"/>
</dbReference>
<dbReference type="GO" id="GO:0010198">
    <property type="term" value="P:synergid death"/>
    <property type="evidence" value="ECO:0000315"/>
    <property type="project" value="TAIR"/>
</dbReference>
<dbReference type="CDD" id="cd10017">
    <property type="entry name" value="B3_DNA"/>
    <property type="match status" value="1"/>
</dbReference>
<dbReference type="Gene3D" id="2.40.330.10">
    <property type="entry name" value="DNA-binding pseudobarrel domain"/>
    <property type="match status" value="2"/>
</dbReference>
<dbReference type="InterPro" id="IPR003340">
    <property type="entry name" value="B3_DNA-bd"/>
</dbReference>
<dbReference type="InterPro" id="IPR015300">
    <property type="entry name" value="DNA-bd_pseudobarrel_sf"/>
</dbReference>
<dbReference type="InterPro" id="IPR050655">
    <property type="entry name" value="Plant_B3_domain"/>
</dbReference>
<dbReference type="PANTHER" id="PTHR31920">
    <property type="entry name" value="B3 DOMAIN-CONTAINING"/>
    <property type="match status" value="1"/>
</dbReference>
<dbReference type="PANTHER" id="PTHR31920:SF32">
    <property type="entry name" value="B3 DOMAIN-CONTAINING PROTEIN REM22"/>
    <property type="match status" value="1"/>
</dbReference>
<dbReference type="Pfam" id="PF02362">
    <property type="entry name" value="B3"/>
    <property type="match status" value="1"/>
</dbReference>
<dbReference type="SMART" id="SM01019">
    <property type="entry name" value="B3"/>
    <property type="match status" value="2"/>
</dbReference>
<dbReference type="SUPFAM" id="SSF101936">
    <property type="entry name" value="DNA-binding pseudobarrel domain"/>
    <property type="match status" value="2"/>
</dbReference>
<dbReference type="PROSITE" id="PS50863">
    <property type="entry name" value="B3"/>
    <property type="match status" value="1"/>
</dbReference>
<feature type="chain" id="PRO_0000375150" description="B3 domain-containing protein At5g60140">
    <location>
        <begin position="1"/>
        <end position="328"/>
    </location>
</feature>
<feature type="DNA-binding region" description="TF-B3" evidence="1">
    <location>
        <begin position="13"/>
        <end position="109"/>
    </location>
</feature>
<feature type="region of interest" description="Disordered" evidence="2">
    <location>
        <begin position="145"/>
        <end position="221"/>
    </location>
</feature>
<feature type="compositionally biased region" description="Acidic residues" evidence="2">
    <location>
        <begin position="148"/>
        <end position="182"/>
    </location>
</feature>
<feature type="compositionally biased region" description="Acidic residues" evidence="2">
    <location>
        <begin position="190"/>
        <end position="221"/>
    </location>
</feature>